<name>SDHD_SHIFL</name>
<gene>
    <name evidence="1" type="primary">dsdA</name>
    <name type="ordered locus">SF2433</name>
    <name type="ordered locus">S2570</name>
</gene>
<protein>
    <recommendedName>
        <fullName evidence="1">D-serine dehydratase</fullName>
        <ecNumber evidence="1">4.3.1.18</ecNumber>
    </recommendedName>
    <alternativeName>
        <fullName evidence="1">D-serine deaminase</fullName>
        <shortName evidence="1">DSD</shortName>
    </alternativeName>
</protein>
<comment type="catalytic activity">
    <reaction evidence="1">
        <text>D-serine = pyruvate + NH4(+)</text>
        <dbReference type="Rhea" id="RHEA:13977"/>
        <dbReference type="ChEBI" id="CHEBI:15361"/>
        <dbReference type="ChEBI" id="CHEBI:28938"/>
        <dbReference type="ChEBI" id="CHEBI:35247"/>
        <dbReference type="EC" id="4.3.1.18"/>
    </reaction>
</comment>
<comment type="cofactor">
    <cofactor evidence="1">
        <name>pyridoxal 5'-phosphate</name>
        <dbReference type="ChEBI" id="CHEBI:597326"/>
    </cofactor>
</comment>
<comment type="subunit">
    <text evidence="1">Monomer.</text>
</comment>
<comment type="similarity">
    <text evidence="1">Belongs to the serine/threonine dehydratase family. DsdA subfamily.</text>
</comment>
<feature type="chain" id="PRO_0000185621" description="D-serine dehydratase">
    <location>
        <begin position="1"/>
        <end position="442"/>
    </location>
</feature>
<feature type="modified residue" description="N6-(pyridoxal phosphate)lysine" evidence="1">
    <location>
        <position position="118"/>
    </location>
</feature>
<keyword id="KW-0456">Lyase</keyword>
<keyword id="KW-0663">Pyridoxal phosphate</keyword>
<keyword id="KW-1185">Reference proteome</keyword>
<accession>Q83MK8</accession>
<accession>Q7C0L9</accession>
<proteinExistence type="inferred from homology"/>
<evidence type="ECO:0000255" key="1">
    <source>
        <dbReference type="HAMAP-Rule" id="MF_01030"/>
    </source>
</evidence>
<sequence>MENAKMNSLIAQYPLVKDLVALKETTWFNPSTTSLAEGLPYVGLTEQDVQDAHARLSRFAPYLAKAFAETAATGGIIESELVAIPAMQKRLEKEYQQPISGQLLLKKDSHLPISGSIKARGGIYEVLAHAEKLALEAGLLTLDDDYSKLLSPEFKQFFSQYSIAVGSTGNLGLSIGIMSARIGFKVTVHMSADARAWKKAKLRSHGVTVVEYEQDYGVAVEEGRKAAQSDPNCFFIDDENSRTLFLGYSVAGQRLKAQFAQQGRIVDADNPLFVYLPCGVGGGPGGVAFGLKLAFGDHVHCFFAEPTHSPCMLLGVHTGLHDQISVQDIGIDNLTAADGLAVGRASCFVGRAMERLLDGFYTLSDQTMYDMLGWLAQEEGIRLEPSALAGMAGPQRVCASVSYQQMHGFSAEQLRNATHLVWATGGGMVPEEEMNQYLAKGR</sequence>
<reference key="1">
    <citation type="journal article" date="2002" name="Nucleic Acids Res.">
        <title>Genome sequence of Shigella flexneri 2a: insights into pathogenicity through comparison with genomes of Escherichia coli K12 and O157.</title>
        <authorList>
            <person name="Jin Q."/>
            <person name="Yuan Z."/>
            <person name="Xu J."/>
            <person name="Wang Y."/>
            <person name="Shen Y."/>
            <person name="Lu W."/>
            <person name="Wang J."/>
            <person name="Liu H."/>
            <person name="Yang J."/>
            <person name="Yang F."/>
            <person name="Zhang X."/>
            <person name="Zhang J."/>
            <person name="Yang G."/>
            <person name="Wu H."/>
            <person name="Qu D."/>
            <person name="Dong J."/>
            <person name="Sun L."/>
            <person name="Xue Y."/>
            <person name="Zhao A."/>
            <person name="Gao Y."/>
            <person name="Zhu J."/>
            <person name="Kan B."/>
            <person name="Ding K."/>
            <person name="Chen S."/>
            <person name="Cheng H."/>
            <person name="Yao Z."/>
            <person name="He B."/>
            <person name="Chen R."/>
            <person name="Ma D."/>
            <person name="Qiang B."/>
            <person name="Wen Y."/>
            <person name="Hou Y."/>
            <person name="Yu J."/>
        </authorList>
    </citation>
    <scope>NUCLEOTIDE SEQUENCE [LARGE SCALE GENOMIC DNA]</scope>
    <source>
        <strain>301 / Serotype 2a</strain>
    </source>
</reference>
<reference key="2">
    <citation type="journal article" date="2003" name="Infect. Immun.">
        <title>Complete genome sequence and comparative genomics of Shigella flexneri serotype 2a strain 2457T.</title>
        <authorList>
            <person name="Wei J."/>
            <person name="Goldberg M.B."/>
            <person name="Burland V."/>
            <person name="Venkatesan M.M."/>
            <person name="Deng W."/>
            <person name="Fournier G."/>
            <person name="Mayhew G.F."/>
            <person name="Plunkett G. III"/>
            <person name="Rose D.J."/>
            <person name="Darling A."/>
            <person name="Mau B."/>
            <person name="Perna N.T."/>
            <person name="Payne S.M."/>
            <person name="Runyen-Janecky L.J."/>
            <person name="Zhou S."/>
            <person name="Schwartz D.C."/>
            <person name="Blattner F.R."/>
        </authorList>
    </citation>
    <scope>NUCLEOTIDE SEQUENCE [LARGE SCALE GENOMIC DNA]</scope>
    <source>
        <strain>ATCC 700930 / 2457T / Serotype 2a</strain>
    </source>
</reference>
<dbReference type="EC" id="4.3.1.18" evidence="1"/>
<dbReference type="EMBL" id="AE005674">
    <property type="protein sequence ID" value="AAN43944.1"/>
    <property type="molecule type" value="Genomic_DNA"/>
</dbReference>
<dbReference type="EMBL" id="AE014073">
    <property type="protein sequence ID" value="AAP17754.1"/>
    <property type="molecule type" value="Genomic_DNA"/>
</dbReference>
<dbReference type="RefSeq" id="NP_708237.1">
    <property type="nucleotide sequence ID" value="NC_004337.2"/>
</dbReference>
<dbReference type="RefSeq" id="WP_000426457.1">
    <property type="nucleotide sequence ID" value="NZ_WPGW01000144.1"/>
</dbReference>
<dbReference type="SMR" id="Q83MK8"/>
<dbReference type="STRING" id="198214.SF2433"/>
<dbReference type="PaxDb" id="198214-SF2433"/>
<dbReference type="GeneID" id="1025561"/>
<dbReference type="KEGG" id="sfl:SF2433"/>
<dbReference type="KEGG" id="sfx:S2570"/>
<dbReference type="PATRIC" id="fig|198214.7.peg.2907"/>
<dbReference type="HOGENOM" id="CLU_035707_0_0_6"/>
<dbReference type="Proteomes" id="UP000001006">
    <property type="component" value="Chromosome"/>
</dbReference>
<dbReference type="Proteomes" id="UP000002673">
    <property type="component" value="Chromosome"/>
</dbReference>
<dbReference type="GO" id="GO:0008721">
    <property type="term" value="F:D-serine ammonia-lyase activity"/>
    <property type="evidence" value="ECO:0007669"/>
    <property type="project" value="UniProtKB-EC"/>
</dbReference>
<dbReference type="GO" id="GO:0016836">
    <property type="term" value="F:hydro-lyase activity"/>
    <property type="evidence" value="ECO:0007669"/>
    <property type="project" value="UniProtKB-UniRule"/>
</dbReference>
<dbReference type="GO" id="GO:0030170">
    <property type="term" value="F:pyridoxal phosphate binding"/>
    <property type="evidence" value="ECO:0007669"/>
    <property type="project" value="InterPro"/>
</dbReference>
<dbReference type="GO" id="GO:0036088">
    <property type="term" value="P:D-serine catabolic process"/>
    <property type="evidence" value="ECO:0007669"/>
    <property type="project" value="TreeGrafter"/>
</dbReference>
<dbReference type="GO" id="GO:0009097">
    <property type="term" value="P:isoleucine biosynthetic process"/>
    <property type="evidence" value="ECO:0007669"/>
    <property type="project" value="TreeGrafter"/>
</dbReference>
<dbReference type="CDD" id="cd06447">
    <property type="entry name" value="D-Ser-dehyd"/>
    <property type="match status" value="1"/>
</dbReference>
<dbReference type="FunFam" id="3.40.50.1100:FF:000018">
    <property type="entry name" value="D-serine dehydratase"/>
    <property type="match status" value="1"/>
</dbReference>
<dbReference type="Gene3D" id="3.40.50.1100">
    <property type="match status" value="2"/>
</dbReference>
<dbReference type="HAMAP" id="MF_01030">
    <property type="entry name" value="D_Ser_dehydrat"/>
    <property type="match status" value="1"/>
</dbReference>
<dbReference type="InterPro" id="IPR011780">
    <property type="entry name" value="D_Ser_am_lyase"/>
</dbReference>
<dbReference type="InterPro" id="IPR050147">
    <property type="entry name" value="Ser/Thr_Dehydratase"/>
</dbReference>
<dbReference type="InterPro" id="IPR000634">
    <property type="entry name" value="Ser/Thr_deHydtase_PyrdxlP-BS"/>
</dbReference>
<dbReference type="InterPro" id="IPR001926">
    <property type="entry name" value="TrpB-like_PALP"/>
</dbReference>
<dbReference type="InterPro" id="IPR036052">
    <property type="entry name" value="TrpB-like_PALP_sf"/>
</dbReference>
<dbReference type="NCBIfam" id="TIGR02035">
    <property type="entry name" value="D_Ser_am_lyase"/>
    <property type="match status" value="1"/>
</dbReference>
<dbReference type="NCBIfam" id="NF002823">
    <property type="entry name" value="PRK02991.1"/>
    <property type="match status" value="1"/>
</dbReference>
<dbReference type="PANTHER" id="PTHR48078:SF9">
    <property type="entry name" value="D-SERINE DEHYDRATASE"/>
    <property type="match status" value="1"/>
</dbReference>
<dbReference type="PANTHER" id="PTHR48078">
    <property type="entry name" value="THREONINE DEHYDRATASE, MITOCHONDRIAL-RELATED"/>
    <property type="match status" value="1"/>
</dbReference>
<dbReference type="Pfam" id="PF00291">
    <property type="entry name" value="PALP"/>
    <property type="match status" value="1"/>
</dbReference>
<dbReference type="SUPFAM" id="SSF53686">
    <property type="entry name" value="Tryptophan synthase beta subunit-like PLP-dependent enzymes"/>
    <property type="match status" value="1"/>
</dbReference>
<dbReference type="PROSITE" id="PS00165">
    <property type="entry name" value="DEHYDRATASE_SER_THR"/>
    <property type="match status" value="1"/>
</dbReference>
<organism>
    <name type="scientific">Shigella flexneri</name>
    <dbReference type="NCBI Taxonomy" id="623"/>
    <lineage>
        <taxon>Bacteria</taxon>
        <taxon>Pseudomonadati</taxon>
        <taxon>Pseudomonadota</taxon>
        <taxon>Gammaproteobacteria</taxon>
        <taxon>Enterobacterales</taxon>
        <taxon>Enterobacteriaceae</taxon>
        <taxon>Shigella</taxon>
    </lineage>
</organism>